<proteinExistence type="inferred from homology"/>
<comment type="function">
    <text evidence="1">Catalyzes the 2-thiolation of uridine at the wobble position (U34) of tRNA, leading to the formation of s(2)U34.</text>
</comment>
<comment type="catalytic activity">
    <reaction evidence="1">
        <text>S-sulfanyl-L-cysteinyl-[protein] + uridine(34) in tRNA + AH2 + ATP = 2-thiouridine(34) in tRNA + L-cysteinyl-[protein] + A + AMP + diphosphate + H(+)</text>
        <dbReference type="Rhea" id="RHEA:47032"/>
        <dbReference type="Rhea" id="RHEA-COMP:10131"/>
        <dbReference type="Rhea" id="RHEA-COMP:11726"/>
        <dbReference type="Rhea" id="RHEA-COMP:11727"/>
        <dbReference type="Rhea" id="RHEA-COMP:11728"/>
        <dbReference type="ChEBI" id="CHEBI:13193"/>
        <dbReference type="ChEBI" id="CHEBI:15378"/>
        <dbReference type="ChEBI" id="CHEBI:17499"/>
        <dbReference type="ChEBI" id="CHEBI:29950"/>
        <dbReference type="ChEBI" id="CHEBI:30616"/>
        <dbReference type="ChEBI" id="CHEBI:33019"/>
        <dbReference type="ChEBI" id="CHEBI:61963"/>
        <dbReference type="ChEBI" id="CHEBI:65315"/>
        <dbReference type="ChEBI" id="CHEBI:87170"/>
        <dbReference type="ChEBI" id="CHEBI:456215"/>
        <dbReference type="EC" id="2.8.1.13"/>
    </reaction>
</comment>
<comment type="subcellular location">
    <subcellularLocation>
        <location evidence="1">Cytoplasm</location>
    </subcellularLocation>
</comment>
<comment type="similarity">
    <text evidence="1">Belongs to the MnmA/TRMU family.</text>
</comment>
<sequence length="375" mass="42115">MLTASNTKAPEQTKVIVGMSGGVDSSVSAYLLKEQGYQVEGLFMKNWEEDDTDEYCAASQDLEDAQAICDKLDIKLHTINFATEYWDNVFEYFLAEYKAGRTPNPDIMCNKEIKFKAFLEFACEDLGADYIATGHYVQRELRDNSWKMIRGLDNNKDQSYFLYTLDEAQLAHTLFPVGHIEKPEVRAIAEKAGLITHNKKDSTGICFIGERKFKDFLGQYLPAQPGIIESAEGVAVGHHDGLMYHTLGQRKGLRIGGLADAGEEPWYVVEKDLLRNVLIVGQGHNHPRLFSKGLIANQLHWVDRKALTSSIQCTVKTRYRQEDVSCTVTPITDSATEEYQIDFTEQQSSVTPGQSVVFYKDDVCLGGGIIDTLIR</sequence>
<organism>
    <name type="scientific">Colwellia psychrerythraea (strain 34H / ATCC BAA-681)</name>
    <name type="common">Vibrio psychroerythus</name>
    <dbReference type="NCBI Taxonomy" id="167879"/>
    <lineage>
        <taxon>Bacteria</taxon>
        <taxon>Pseudomonadati</taxon>
        <taxon>Pseudomonadota</taxon>
        <taxon>Gammaproteobacteria</taxon>
        <taxon>Alteromonadales</taxon>
        <taxon>Colwelliaceae</taxon>
        <taxon>Colwellia</taxon>
    </lineage>
</organism>
<feature type="chain" id="PRO_0000349602" description="tRNA-specific 2-thiouridylase MnmA">
    <location>
        <begin position="1"/>
        <end position="375"/>
    </location>
</feature>
<feature type="region of interest" description="Interaction with target base in tRNA" evidence="1">
    <location>
        <begin position="104"/>
        <end position="106"/>
    </location>
</feature>
<feature type="region of interest" description="Interaction with tRNA" evidence="1">
    <location>
        <begin position="156"/>
        <end position="158"/>
    </location>
</feature>
<feature type="region of interest" description="Interaction with tRNA" evidence="1">
    <location>
        <begin position="318"/>
        <end position="319"/>
    </location>
</feature>
<feature type="active site" description="Nucleophile" evidence="1">
    <location>
        <position position="109"/>
    </location>
</feature>
<feature type="active site" description="Cysteine persulfide intermediate" evidence="1">
    <location>
        <position position="206"/>
    </location>
</feature>
<feature type="binding site" evidence="1">
    <location>
        <begin position="18"/>
        <end position="25"/>
    </location>
    <ligand>
        <name>ATP</name>
        <dbReference type="ChEBI" id="CHEBI:30616"/>
    </ligand>
</feature>
<feature type="binding site" evidence="1">
    <location>
        <position position="44"/>
    </location>
    <ligand>
        <name>ATP</name>
        <dbReference type="ChEBI" id="CHEBI:30616"/>
    </ligand>
</feature>
<feature type="binding site" evidence="1">
    <location>
        <position position="134"/>
    </location>
    <ligand>
        <name>ATP</name>
        <dbReference type="ChEBI" id="CHEBI:30616"/>
    </ligand>
</feature>
<feature type="site" description="Interaction with tRNA" evidence="1">
    <location>
        <position position="135"/>
    </location>
</feature>
<feature type="site" description="Interaction with tRNA" evidence="1">
    <location>
        <position position="354"/>
    </location>
</feature>
<feature type="disulfide bond" description="Alternate" evidence="1">
    <location>
        <begin position="109"/>
        <end position="206"/>
    </location>
</feature>
<keyword id="KW-0067">ATP-binding</keyword>
<keyword id="KW-0963">Cytoplasm</keyword>
<keyword id="KW-1015">Disulfide bond</keyword>
<keyword id="KW-0547">Nucleotide-binding</keyword>
<keyword id="KW-0694">RNA-binding</keyword>
<keyword id="KW-0808">Transferase</keyword>
<keyword id="KW-0819">tRNA processing</keyword>
<keyword id="KW-0820">tRNA-binding</keyword>
<protein>
    <recommendedName>
        <fullName evidence="1">tRNA-specific 2-thiouridylase MnmA</fullName>
        <ecNumber evidence="1">2.8.1.13</ecNumber>
    </recommendedName>
</protein>
<gene>
    <name evidence="1" type="primary">mnmA</name>
    <name type="ordered locus">CPS_2900</name>
</gene>
<evidence type="ECO:0000255" key="1">
    <source>
        <dbReference type="HAMAP-Rule" id="MF_00144"/>
    </source>
</evidence>
<name>MNMA_COLP3</name>
<accession>Q480B8</accession>
<reference key="1">
    <citation type="journal article" date="2005" name="Proc. Natl. Acad. Sci. U.S.A.">
        <title>The psychrophilic lifestyle as revealed by the genome sequence of Colwellia psychrerythraea 34H through genomic and proteomic analyses.</title>
        <authorList>
            <person name="Methe B.A."/>
            <person name="Nelson K.E."/>
            <person name="Deming J.W."/>
            <person name="Momen B."/>
            <person name="Melamud E."/>
            <person name="Zhang X."/>
            <person name="Moult J."/>
            <person name="Madupu R."/>
            <person name="Nelson W.C."/>
            <person name="Dodson R.J."/>
            <person name="Brinkac L.M."/>
            <person name="Daugherty S.C."/>
            <person name="Durkin A.S."/>
            <person name="DeBoy R.T."/>
            <person name="Kolonay J.F."/>
            <person name="Sullivan S.A."/>
            <person name="Zhou L."/>
            <person name="Davidsen T.M."/>
            <person name="Wu M."/>
            <person name="Huston A.L."/>
            <person name="Lewis M."/>
            <person name="Weaver B."/>
            <person name="Weidman J.F."/>
            <person name="Khouri H."/>
            <person name="Utterback T.R."/>
            <person name="Feldblyum T.V."/>
            <person name="Fraser C.M."/>
        </authorList>
    </citation>
    <scope>NUCLEOTIDE SEQUENCE [LARGE SCALE GENOMIC DNA]</scope>
    <source>
        <strain>34H / ATCC BAA-681</strain>
    </source>
</reference>
<dbReference type="EC" id="2.8.1.13" evidence="1"/>
<dbReference type="EMBL" id="CP000083">
    <property type="protein sequence ID" value="AAZ27774.1"/>
    <property type="molecule type" value="Genomic_DNA"/>
</dbReference>
<dbReference type="RefSeq" id="WP_011043693.1">
    <property type="nucleotide sequence ID" value="NC_003910.7"/>
</dbReference>
<dbReference type="SMR" id="Q480B8"/>
<dbReference type="STRING" id="167879.CPS_2900"/>
<dbReference type="KEGG" id="cps:CPS_2900"/>
<dbReference type="eggNOG" id="COG0482">
    <property type="taxonomic scope" value="Bacteria"/>
</dbReference>
<dbReference type="HOGENOM" id="CLU_035188_1_0_6"/>
<dbReference type="Proteomes" id="UP000000547">
    <property type="component" value="Chromosome"/>
</dbReference>
<dbReference type="GO" id="GO:0005737">
    <property type="term" value="C:cytoplasm"/>
    <property type="evidence" value="ECO:0007669"/>
    <property type="project" value="UniProtKB-SubCell"/>
</dbReference>
<dbReference type="GO" id="GO:0005524">
    <property type="term" value="F:ATP binding"/>
    <property type="evidence" value="ECO:0007669"/>
    <property type="project" value="UniProtKB-KW"/>
</dbReference>
<dbReference type="GO" id="GO:0000049">
    <property type="term" value="F:tRNA binding"/>
    <property type="evidence" value="ECO:0007669"/>
    <property type="project" value="UniProtKB-KW"/>
</dbReference>
<dbReference type="GO" id="GO:0103016">
    <property type="term" value="F:tRNA-uridine 2-sulfurtransferase activity"/>
    <property type="evidence" value="ECO:0007669"/>
    <property type="project" value="UniProtKB-EC"/>
</dbReference>
<dbReference type="GO" id="GO:0002143">
    <property type="term" value="P:tRNA wobble position uridine thiolation"/>
    <property type="evidence" value="ECO:0007669"/>
    <property type="project" value="TreeGrafter"/>
</dbReference>
<dbReference type="CDD" id="cd01998">
    <property type="entry name" value="MnmA_TRMU-like"/>
    <property type="match status" value="1"/>
</dbReference>
<dbReference type="FunFam" id="2.30.30.280:FF:000001">
    <property type="entry name" value="tRNA-specific 2-thiouridylase MnmA"/>
    <property type="match status" value="1"/>
</dbReference>
<dbReference type="FunFam" id="2.40.30.10:FF:000023">
    <property type="entry name" value="tRNA-specific 2-thiouridylase MnmA"/>
    <property type="match status" value="1"/>
</dbReference>
<dbReference type="FunFam" id="3.40.50.620:FF:000004">
    <property type="entry name" value="tRNA-specific 2-thiouridylase MnmA"/>
    <property type="match status" value="1"/>
</dbReference>
<dbReference type="Gene3D" id="2.30.30.280">
    <property type="entry name" value="Adenine nucleotide alpha hydrolases-like domains"/>
    <property type="match status" value="1"/>
</dbReference>
<dbReference type="Gene3D" id="3.40.50.620">
    <property type="entry name" value="HUPs"/>
    <property type="match status" value="1"/>
</dbReference>
<dbReference type="Gene3D" id="2.40.30.10">
    <property type="entry name" value="Translation factors"/>
    <property type="match status" value="1"/>
</dbReference>
<dbReference type="HAMAP" id="MF_00144">
    <property type="entry name" value="tRNA_thiouridyl_MnmA"/>
    <property type="match status" value="1"/>
</dbReference>
<dbReference type="InterPro" id="IPR004506">
    <property type="entry name" value="MnmA-like"/>
</dbReference>
<dbReference type="InterPro" id="IPR046885">
    <property type="entry name" value="MnmA-like_C"/>
</dbReference>
<dbReference type="InterPro" id="IPR046884">
    <property type="entry name" value="MnmA-like_central"/>
</dbReference>
<dbReference type="InterPro" id="IPR023382">
    <property type="entry name" value="MnmA-like_central_sf"/>
</dbReference>
<dbReference type="InterPro" id="IPR014729">
    <property type="entry name" value="Rossmann-like_a/b/a_fold"/>
</dbReference>
<dbReference type="NCBIfam" id="NF001138">
    <property type="entry name" value="PRK00143.1"/>
    <property type="match status" value="1"/>
</dbReference>
<dbReference type="NCBIfam" id="TIGR00420">
    <property type="entry name" value="trmU"/>
    <property type="match status" value="1"/>
</dbReference>
<dbReference type="PANTHER" id="PTHR11933:SF5">
    <property type="entry name" value="MITOCHONDRIAL TRNA-SPECIFIC 2-THIOURIDYLASE 1"/>
    <property type="match status" value="1"/>
</dbReference>
<dbReference type="PANTHER" id="PTHR11933">
    <property type="entry name" value="TRNA 5-METHYLAMINOMETHYL-2-THIOURIDYLATE -METHYLTRANSFERASE"/>
    <property type="match status" value="1"/>
</dbReference>
<dbReference type="Pfam" id="PF03054">
    <property type="entry name" value="tRNA_Me_trans"/>
    <property type="match status" value="1"/>
</dbReference>
<dbReference type="Pfam" id="PF20258">
    <property type="entry name" value="tRNA_Me_trans_C"/>
    <property type="match status" value="1"/>
</dbReference>
<dbReference type="Pfam" id="PF20259">
    <property type="entry name" value="tRNA_Me_trans_M"/>
    <property type="match status" value="1"/>
</dbReference>
<dbReference type="SUPFAM" id="SSF52402">
    <property type="entry name" value="Adenine nucleotide alpha hydrolases-like"/>
    <property type="match status" value="1"/>
</dbReference>